<dbReference type="GO" id="GO:0005576">
    <property type="term" value="C:extracellular region"/>
    <property type="evidence" value="ECO:0007669"/>
    <property type="project" value="UniProtKB-SubCell"/>
</dbReference>
<dbReference type="GO" id="GO:0007218">
    <property type="term" value="P:neuropeptide signaling pathway"/>
    <property type="evidence" value="ECO:0007669"/>
    <property type="project" value="UniProtKB-KW"/>
</dbReference>
<name>PVK2_MANKU</name>
<reference evidence="5" key="1">
    <citation type="journal article" date="2012" name="Syst. Biol.">
        <title>Peptidomics-based phylogeny and biogeography of Mantophasmatodea (Hexapoda).</title>
        <authorList>
            <person name="Predel R."/>
            <person name="Neupert S."/>
            <person name="Huetteroth W."/>
            <person name="Kahnt J."/>
            <person name="Waidelich D."/>
            <person name="Roth S."/>
        </authorList>
    </citation>
    <scope>PROTEIN SEQUENCE</scope>
    <scope>AMIDATION AT VAL-19</scope>
    <source>
        <tissue evidence="3">Abdominal perisympathetic organs</tissue>
    </source>
</reference>
<protein>
    <recommendedName>
        <fullName evidence="4">CAPA-Periviscerokinin-2</fullName>
        <shortName evidence="4">CAPA-PVK-2</shortName>
    </recommendedName>
</protein>
<evidence type="ECO:0000250" key="1">
    <source>
        <dbReference type="UniProtKB" id="P83923"/>
    </source>
</evidence>
<evidence type="ECO:0000255" key="2"/>
<evidence type="ECO:0000269" key="3">
    <source>
    </source>
</evidence>
<evidence type="ECO:0000303" key="4">
    <source>
    </source>
</evidence>
<evidence type="ECO:0000305" key="5"/>
<evidence type="ECO:0000305" key="6">
    <source>
    </source>
</evidence>
<proteinExistence type="evidence at protein level"/>
<feature type="peptide" id="PRO_0000420788" description="CAPA-Periviscerokinin-2" evidence="3">
    <location>
        <begin position="1"/>
        <end position="19"/>
    </location>
</feature>
<feature type="modified residue" description="Valine amide" evidence="3">
    <location>
        <position position="19"/>
    </location>
</feature>
<sequence>SGLQFAVLDGQGFLPFSRV</sequence>
<organism>
    <name type="scientific">Mantophasma kudubergense</name>
    <name type="common">Gladiator</name>
    <name type="synonym">Heel-walker</name>
    <dbReference type="NCBI Taxonomy" id="1037657"/>
    <lineage>
        <taxon>Eukaryota</taxon>
        <taxon>Metazoa</taxon>
        <taxon>Ecdysozoa</taxon>
        <taxon>Arthropoda</taxon>
        <taxon>Hexapoda</taxon>
        <taxon>Insecta</taxon>
        <taxon>Pterygota</taxon>
        <taxon>Neoptera</taxon>
        <taxon>Polyneoptera</taxon>
        <taxon>Mantophasmatodea</taxon>
        <taxon>Mantophasmatidae</taxon>
        <taxon>Mantophasma</taxon>
    </lineage>
</organism>
<keyword id="KW-0027">Amidation</keyword>
<keyword id="KW-0903">Direct protein sequencing</keyword>
<keyword id="KW-0527">Neuropeptide</keyword>
<keyword id="KW-0964">Secreted</keyword>
<accession>B0M3C5</accession>
<comment type="function">
    <text evidence="1">Mediates visceral muscle contractile activity (myotropic activity).</text>
</comment>
<comment type="subcellular location">
    <subcellularLocation>
        <location evidence="6">Secreted</location>
    </subcellularLocation>
</comment>
<comment type="similarity">
    <text evidence="2">Belongs to the periviscerokinin family.</text>
</comment>